<feature type="chain" id="PRO_0000337967" description="Cell cycle protein GpsB">
    <location>
        <begin position="1"/>
        <end position="111"/>
    </location>
</feature>
<feature type="region of interest" description="Disordered" evidence="2">
    <location>
        <begin position="59"/>
        <end position="80"/>
    </location>
</feature>
<feature type="coiled-coil region" evidence="1">
    <location>
        <begin position="32"/>
        <end position="63"/>
    </location>
</feature>
<feature type="compositionally biased region" description="Polar residues" evidence="2">
    <location>
        <begin position="60"/>
        <end position="71"/>
    </location>
</feature>
<protein>
    <recommendedName>
        <fullName evidence="1">Cell cycle protein GpsB</fullName>
    </recommendedName>
    <alternativeName>
        <fullName evidence="1">Guiding PBP1-shuttling protein</fullName>
    </alternativeName>
</protein>
<reference key="1">
    <citation type="journal article" date="2007" name="PLoS ONE">
        <title>A glimpse of streptococcal toxic shock syndrome from comparative genomics of S. suis 2 Chinese isolates.</title>
        <authorList>
            <person name="Chen C."/>
            <person name="Tang J."/>
            <person name="Dong W."/>
            <person name="Wang C."/>
            <person name="Feng Y."/>
            <person name="Wang J."/>
            <person name="Zheng F."/>
            <person name="Pan X."/>
            <person name="Liu D."/>
            <person name="Li M."/>
            <person name="Song Y."/>
            <person name="Zhu X."/>
            <person name="Sun H."/>
            <person name="Feng T."/>
            <person name="Guo Z."/>
            <person name="Ju A."/>
            <person name="Ge J."/>
            <person name="Dong Y."/>
            <person name="Sun W."/>
            <person name="Jiang Y."/>
            <person name="Wang J."/>
            <person name="Yan J."/>
            <person name="Yang H."/>
            <person name="Wang X."/>
            <person name="Gao G.F."/>
            <person name="Yang R."/>
            <person name="Wang J."/>
            <person name="Yu J."/>
        </authorList>
    </citation>
    <scope>NUCLEOTIDE SEQUENCE [LARGE SCALE GENOMIC DNA]</scope>
    <source>
        <strain>05ZYH33</strain>
    </source>
</reference>
<name>GPSB_STRSY</name>
<dbReference type="EMBL" id="CP000407">
    <property type="protein sequence ID" value="ABP89384.1"/>
    <property type="molecule type" value="Genomic_DNA"/>
</dbReference>
<dbReference type="SMR" id="A4VTE5"/>
<dbReference type="STRING" id="391295.SSU05_0417"/>
<dbReference type="KEGG" id="ssu:SSU05_0417"/>
<dbReference type="eggNOG" id="COG3599">
    <property type="taxonomic scope" value="Bacteria"/>
</dbReference>
<dbReference type="HOGENOM" id="CLU_140309_1_0_9"/>
<dbReference type="GO" id="GO:0005737">
    <property type="term" value="C:cytoplasm"/>
    <property type="evidence" value="ECO:0007669"/>
    <property type="project" value="UniProtKB-SubCell"/>
</dbReference>
<dbReference type="GO" id="GO:0051301">
    <property type="term" value="P:cell division"/>
    <property type="evidence" value="ECO:0007669"/>
    <property type="project" value="UniProtKB-UniRule"/>
</dbReference>
<dbReference type="GO" id="GO:0008360">
    <property type="term" value="P:regulation of cell shape"/>
    <property type="evidence" value="ECO:0007669"/>
    <property type="project" value="UniProtKB-UniRule"/>
</dbReference>
<dbReference type="Gene3D" id="6.10.250.660">
    <property type="match status" value="1"/>
</dbReference>
<dbReference type="HAMAP" id="MF_02011">
    <property type="entry name" value="GpsB"/>
    <property type="match status" value="1"/>
</dbReference>
<dbReference type="InterPro" id="IPR011229">
    <property type="entry name" value="Cell_cycle_GpsB"/>
</dbReference>
<dbReference type="InterPro" id="IPR019933">
    <property type="entry name" value="DivIVA_domain"/>
</dbReference>
<dbReference type="InterPro" id="IPR007793">
    <property type="entry name" value="DivIVA_fam"/>
</dbReference>
<dbReference type="NCBIfam" id="TIGR03544">
    <property type="entry name" value="DivI1A_domain"/>
    <property type="match status" value="1"/>
</dbReference>
<dbReference type="NCBIfam" id="NF010725">
    <property type="entry name" value="PRK14127.1"/>
    <property type="match status" value="1"/>
</dbReference>
<dbReference type="PANTHER" id="PTHR35794:SF1">
    <property type="entry name" value="CELL CYCLE PROTEIN GPSB"/>
    <property type="match status" value="1"/>
</dbReference>
<dbReference type="PANTHER" id="PTHR35794">
    <property type="entry name" value="CELL DIVISION PROTEIN DIVIVA"/>
    <property type="match status" value="1"/>
</dbReference>
<dbReference type="Pfam" id="PF05103">
    <property type="entry name" value="DivIVA"/>
    <property type="match status" value="1"/>
</dbReference>
<dbReference type="PIRSF" id="PIRSF029938">
    <property type="entry name" value="UCP029938"/>
    <property type="match status" value="1"/>
</dbReference>
<evidence type="ECO:0000255" key="1">
    <source>
        <dbReference type="HAMAP-Rule" id="MF_02011"/>
    </source>
</evidence>
<evidence type="ECO:0000256" key="2">
    <source>
        <dbReference type="SAM" id="MobiDB-lite"/>
    </source>
</evidence>
<comment type="function">
    <text evidence="1">Divisome component that associates with the complex late in its assembly, after the Z-ring is formed, and is dependent on DivIC and PBP2B for its recruitment to the divisome. Together with EzrA, is a key component of the system that regulates PBP1 localization during cell cycle progression. Its main role could be the removal of PBP1 from the cell pole after pole maturation is completed. Also contributes to the recruitment of PBP1 to the division complex. Not essential for septum formation.</text>
</comment>
<comment type="subunit">
    <text evidence="1">Forms polymers through the coiled coil domains. Interacts with PBP1, MreC and EzrA.</text>
</comment>
<comment type="subcellular location">
    <subcellularLocation>
        <location evidence="1">Cytoplasm</location>
    </subcellularLocation>
    <text evidence="1">Shuttles between the lateral wall and the division site in a cell cycle-dependent manner.</text>
</comment>
<comment type="similarity">
    <text evidence="1">Belongs to the GpsB family.</text>
</comment>
<accession>A4VTE5</accession>
<gene>
    <name evidence="1" type="primary">gpsB</name>
    <name type="ordered locus">SSU05_0417</name>
</gene>
<proteinExistence type="inferred from homology"/>
<sequence>MASIKFTTKDIFEQDFKIGFRGYDQDEVNDFLDDIMKDYDAYEAIIKELKGEIARLKAQAANSPKTTLPTEESNDVLRTERPSSATNFDILRRLNRLEKEVFGKQIVQDQE</sequence>
<organism>
    <name type="scientific">Streptococcus suis (strain 05ZYH33)</name>
    <dbReference type="NCBI Taxonomy" id="391295"/>
    <lineage>
        <taxon>Bacteria</taxon>
        <taxon>Bacillati</taxon>
        <taxon>Bacillota</taxon>
        <taxon>Bacilli</taxon>
        <taxon>Lactobacillales</taxon>
        <taxon>Streptococcaceae</taxon>
        <taxon>Streptococcus</taxon>
    </lineage>
</organism>
<keyword id="KW-0131">Cell cycle</keyword>
<keyword id="KW-0132">Cell division</keyword>
<keyword id="KW-0133">Cell shape</keyword>
<keyword id="KW-0175">Coiled coil</keyword>
<keyword id="KW-0963">Cytoplasm</keyword>